<feature type="chain" id="PRO_0000402095" description="Eukaryotic translation initiation factor 6">
    <location>
        <begin position="1"/>
        <end position="245"/>
    </location>
</feature>
<feature type="modified residue" description="Phosphotyrosine" evidence="2">
    <location>
        <position position="113"/>
    </location>
</feature>
<feature type="modified residue" description="Phosphothreonine" evidence="1 3">
    <location>
        <position position="165"/>
    </location>
</feature>
<feature type="modified residue" description="Phosphoserine" evidence="1 3">
    <location>
        <position position="166"/>
    </location>
</feature>
<feature type="modified residue" description="Phosphoserine; by CK1" evidence="2 3">
    <location>
        <position position="174"/>
    </location>
</feature>
<feature type="modified residue" description="Phosphoserine; by CK1" evidence="2 3">
    <location>
        <position position="175"/>
    </location>
</feature>
<feature type="modified residue" description="Phosphoserine; by PKC" evidence="2 3">
    <location>
        <position position="235"/>
    </location>
</feature>
<feature type="modified residue" description="Phosphoserine" evidence="2 3">
    <location>
        <position position="239"/>
    </location>
</feature>
<feature type="modified residue" description="Phosphoserine" evidence="4">
    <location>
        <position position="243"/>
    </location>
</feature>
<proteinExistence type="evidence at protein level"/>
<organism>
    <name type="scientific">Rattus norvegicus</name>
    <name type="common">Rat</name>
    <dbReference type="NCBI Taxonomy" id="10116"/>
    <lineage>
        <taxon>Eukaryota</taxon>
        <taxon>Metazoa</taxon>
        <taxon>Chordata</taxon>
        <taxon>Craniata</taxon>
        <taxon>Vertebrata</taxon>
        <taxon>Euteleostomi</taxon>
        <taxon>Mammalia</taxon>
        <taxon>Eutheria</taxon>
        <taxon>Euarchontoglires</taxon>
        <taxon>Glires</taxon>
        <taxon>Rodentia</taxon>
        <taxon>Myomorpha</taxon>
        <taxon>Muroidea</taxon>
        <taxon>Muridae</taxon>
        <taxon>Murinae</taxon>
        <taxon>Rattus</taxon>
    </lineage>
</organism>
<gene>
    <name type="primary">Eif6</name>
    <name type="synonym">Itgb4bp</name>
</gene>
<protein>
    <recommendedName>
        <fullName evidence="3">Eukaryotic translation initiation factor 6</fullName>
        <shortName evidence="3">eIF-6</shortName>
    </recommendedName>
</protein>
<keyword id="KW-0963">Cytoplasm</keyword>
<keyword id="KW-0396">Initiation factor</keyword>
<keyword id="KW-0539">Nucleus</keyword>
<keyword id="KW-0597">Phosphoprotein</keyword>
<keyword id="KW-0648">Protein biosynthesis</keyword>
<keyword id="KW-1185">Reference proteome</keyword>
<keyword id="KW-0690">Ribosome biogenesis</keyword>
<keyword id="KW-0832">Ubl conjugation</keyword>
<sequence>MAVRASFENNCEVGCFAKLTNTYCLVAIGGSENFYSVFEGELSDTIPVVHASIAGCRIIGRMCVGNRHGLLVPNNTTDQELQHIRNSLPDSVQIRRVEERLSALGNVTTCNDYVALVHPDLDRETEEILADVLKVEVFRQTVADQVLVGSYCVFSNQGGLVHPKTSIEDQDELSSLLQVPLVAGTVNRGSEVIAAGMVVNDWCAFCGLDTTSTELSVVESVFKLNEAKPSTIATSMRDSLIDSLT</sequence>
<comment type="function">
    <text evidence="3">Binds to the 60S ribosomal subunit and prevents its association with the 40S ribosomal subunit to form the 80S initiation complex in the cytoplasm. Behaves as a stimulatory translation initiation factor downstream insulin/growth factors. Is also involved in ribosome biogenesis. Associates with pre-60S subunits in the nucleus and is involved in its nuclear export. Cytoplasmic release of TIF6 from 60S subunits and nuclear relocalization is promoted by a RACK1 (RACK1)-dependent protein kinase C activity. In tissues responsive to insulin, controls fatty acid synthesis and glycolysis by exerting translational control of adipogenic transcription factors such as CEBPB, CEBPD and ATF4 that have G/C rich or uORF in their 5'UTR. Required for ROS-dependent megakaryocyte maturation and platelets formation, controls the expression of mitochondrial respiratory chain genes involved in reactive oxygen species (ROS) synthesis. Involved in miRNA-mediated gene silencing by the RNA-induced silencing complex (RISC). Required for both miRNA-mediated translational repression and miRNA-mediated cleavage of complementary mRNAs by RISC. Modulates cell cycle progression and global translation of pre-B cells, its activation seems to be rate-limiting in tumorigenesis and tumor growth.</text>
</comment>
<comment type="subunit">
    <text evidence="3">Monomer. Associates with the 60S ribosomal subunit. Interacts with RACK1. Interacts with DICER1, AGO2, TARBP2, MOV10 and RPL7A; they form a large RNA-induced silencing complex (RISC).</text>
</comment>
<comment type="subcellular location">
    <subcellularLocation>
        <location evidence="3">Cytoplasm</location>
    </subcellularLocation>
    <subcellularLocation>
        <location evidence="3">Nucleus</location>
        <location evidence="3">Nucleolus</location>
    </subcellularLocation>
    <text evidence="3">Shuttles between cytoplasm and nucleus/nucleolus.</text>
</comment>
<comment type="PTM">
    <text evidence="2">Phosphorylation at Ser-174 and Ser-175 by CSNK1D/CK1 promotes nuclear export.</text>
</comment>
<comment type="PTM">
    <text evidence="1">Ufmylated by UFL1.</text>
</comment>
<comment type="similarity">
    <text evidence="3">Belongs to the eIF-6 family.</text>
</comment>
<dbReference type="EMBL" id="CH474050">
    <property type="protein sequence ID" value="EDL85894.1"/>
    <property type="molecule type" value="Genomic_DNA"/>
</dbReference>
<dbReference type="EMBL" id="BC105764">
    <property type="protein sequence ID" value="AAI05765.1"/>
    <property type="molecule type" value="mRNA"/>
</dbReference>
<dbReference type="RefSeq" id="NP_001032429.1">
    <property type="nucleotide sequence ID" value="NM_001037352.1"/>
</dbReference>
<dbReference type="RefSeq" id="XP_006235378.1">
    <property type="nucleotide sequence ID" value="XM_006235316.3"/>
</dbReference>
<dbReference type="RefSeq" id="XP_017447156.1">
    <property type="nucleotide sequence ID" value="XM_017591667.1"/>
</dbReference>
<dbReference type="SMR" id="Q3KRD8"/>
<dbReference type="BioGRID" id="258203">
    <property type="interactions" value="1"/>
</dbReference>
<dbReference type="FunCoup" id="Q3KRD8">
    <property type="interactions" value="2934"/>
</dbReference>
<dbReference type="IntAct" id="Q3KRD8">
    <property type="interactions" value="1"/>
</dbReference>
<dbReference type="STRING" id="10116.ENSRNOP00000071658"/>
<dbReference type="iPTMnet" id="Q3KRD8"/>
<dbReference type="PhosphoSitePlus" id="Q3KRD8"/>
<dbReference type="jPOST" id="Q3KRD8"/>
<dbReference type="PaxDb" id="10116-ENSRNOP00000066257"/>
<dbReference type="Ensembl" id="ENSRNOT00000073492.3">
    <property type="protein sequence ID" value="ENSRNOP00000066257.1"/>
    <property type="gene ID" value="ENSRNOG00000049497.3"/>
</dbReference>
<dbReference type="GeneID" id="305506"/>
<dbReference type="KEGG" id="rno:305506"/>
<dbReference type="AGR" id="RGD:1305373"/>
<dbReference type="CTD" id="3692"/>
<dbReference type="RGD" id="1305373">
    <property type="gene designation" value="Eif6"/>
</dbReference>
<dbReference type="eggNOG" id="KOG3185">
    <property type="taxonomic scope" value="Eukaryota"/>
</dbReference>
<dbReference type="GeneTree" id="ENSGT00390000015972"/>
<dbReference type="HOGENOM" id="CLU_071894_0_0_1"/>
<dbReference type="InParanoid" id="Q3KRD8"/>
<dbReference type="OMA" id="WCAFCGM"/>
<dbReference type="OrthoDB" id="4155914at2759"/>
<dbReference type="PhylomeDB" id="Q3KRD8"/>
<dbReference type="PRO" id="PR:Q3KRD8"/>
<dbReference type="Proteomes" id="UP000002494">
    <property type="component" value="Chromosome 3"/>
</dbReference>
<dbReference type="Proteomes" id="UP000234681">
    <property type="component" value="Chromosome 3"/>
</dbReference>
<dbReference type="Bgee" id="ENSRNOG00000049497">
    <property type="expression patterns" value="Expressed in jejunum and 20 other cell types or tissues"/>
</dbReference>
<dbReference type="ExpressionAtlas" id="Q3KRD8">
    <property type="expression patterns" value="baseline and differential"/>
</dbReference>
<dbReference type="GO" id="GO:0005737">
    <property type="term" value="C:cytoplasm"/>
    <property type="evidence" value="ECO:0000266"/>
    <property type="project" value="RGD"/>
</dbReference>
<dbReference type="GO" id="GO:0005829">
    <property type="term" value="C:cytosol"/>
    <property type="evidence" value="ECO:0000318"/>
    <property type="project" value="GO_Central"/>
</dbReference>
<dbReference type="GO" id="GO:0005882">
    <property type="term" value="C:intermediate filament"/>
    <property type="evidence" value="ECO:0000266"/>
    <property type="project" value="RGD"/>
</dbReference>
<dbReference type="GO" id="GO:0005638">
    <property type="term" value="C:lamin filament"/>
    <property type="evidence" value="ECO:0000266"/>
    <property type="project" value="RGD"/>
</dbReference>
<dbReference type="GO" id="GO:0005730">
    <property type="term" value="C:nucleolus"/>
    <property type="evidence" value="ECO:0007669"/>
    <property type="project" value="UniProtKB-SubCell"/>
</dbReference>
<dbReference type="GO" id="GO:0005634">
    <property type="term" value="C:nucleus"/>
    <property type="evidence" value="ECO:0000266"/>
    <property type="project" value="RGD"/>
</dbReference>
<dbReference type="GO" id="GO:0045202">
    <property type="term" value="C:synapse"/>
    <property type="evidence" value="ECO:0000266"/>
    <property type="project" value="RGD"/>
</dbReference>
<dbReference type="GO" id="GO:0043023">
    <property type="term" value="F:ribosomal large subunit binding"/>
    <property type="evidence" value="ECO:0000318"/>
    <property type="project" value="GO_Central"/>
</dbReference>
<dbReference type="GO" id="GO:0043022">
    <property type="term" value="F:ribosome binding"/>
    <property type="evidence" value="ECO:0000266"/>
    <property type="project" value="RGD"/>
</dbReference>
<dbReference type="GO" id="GO:0003743">
    <property type="term" value="F:translation initiation factor activity"/>
    <property type="evidence" value="ECO:0007669"/>
    <property type="project" value="UniProtKB-UniRule"/>
</dbReference>
<dbReference type="GO" id="GO:1902626">
    <property type="term" value="P:assembly of large subunit precursor of preribosome"/>
    <property type="evidence" value="ECO:0000318"/>
    <property type="project" value="GO_Central"/>
</dbReference>
<dbReference type="GO" id="GO:0042256">
    <property type="term" value="P:cytosolic ribosome assembly"/>
    <property type="evidence" value="ECO:0000266"/>
    <property type="project" value="RGD"/>
</dbReference>
<dbReference type="GO" id="GO:0000460">
    <property type="term" value="P:maturation of 5.8S rRNA"/>
    <property type="evidence" value="ECO:0000318"/>
    <property type="project" value="GO_Central"/>
</dbReference>
<dbReference type="GO" id="GO:0000470">
    <property type="term" value="P:maturation of LSU-rRNA"/>
    <property type="evidence" value="ECO:0000318"/>
    <property type="project" value="GO_Central"/>
</dbReference>
<dbReference type="GO" id="GO:0035278">
    <property type="term" value="P:miRNA-mediated gene silencing by inhibition of translation"/>
    <property type="evidence" value="ECO:0000250"/>
    <property type="project" value="UniProtKB"/>
</dbReference>
<dbReference type="GO" id="GO:0035195">
    <property type="term" value="P:miRNA-mediated post-transcriptional gene silencing"/>
    <property type="evidence" value="ECO:0000250"/>
    <property type="project" value="UniProtKB"/>
</dbReference>
<dbReference type="GO" id="GO:0045727">
    <property type="term" value="P:positive regulation of translation"/>
    <property type="evidence" value="ECO:0000250"/>
    <property type="project" value="UniProtKB"/>
</dbReference>
<dbReference type="GO" id="GO:0042304">
    <property type="term" value="P:regulation of fatty acid biosynthetic process"/>
    <property type="evidence" value="ECO:0000250"/>
    <property type="project" value="UniProtKB"/>
</dbReference>
<dbReference type="GO" id="GO:0006110">
    <property type="term" value="P:regulation of glycolytic process"/>
    <property type="evidence" value="ECO:0000250"/>
    <property type="project" value="UniProtKB"/>
</dbReference>
<dbReference type="GO" id="GO:0045652">
    <property type="term" value="P:regulation of megakaryocyte differentiation"/>
    <property type="evidence" value="ECO:0000250"/>
    <property type="project" value="UniProtKB"/>
</dbReference>
<dbReference type="GO" id="GO:2000377">
    <property type="term" value="P:regulation of reactive oxygen species metabolic process"/>
    <property type="evidence" value="ECO:0000250"/>
    <property type="project" value="UniProtKB"/>
</dbReference>
<dbReference type="GO" id="GO:0032868">
    <property type="term" value="P:response to insulin"/>
    <property type="evidence" value="ECO:0000250"/>
    <property type="project" value="UniProtKB"/>
</dbReference>
<dbReference type="GO" id="GO:0000054">
    <property type="term" value="P:ribosomal subunit export from nucleus"/>
    <property type="evidence" value="ECO:0000318"/>
    <property type="project" value="GO_Central"/>
</dbReference>
<dbReference type="CDD" id="cd00527">
    <property type="entry name" value="IF6"/>
    <property type="match status" value="1"/>
</dbReference>
<dbReference type="FunFam" id="3.75.10.10:FF:000001">
    <property type="entry name" value="Eukaryotic translation initiation factor 6"/>
    <property type="match status" value="1"/>
</dbReference>
<dbReference type="Gene3D" id="3.75.10.10">
    <property type="entry name" value="L-arginine/glycine Amidinotransferase, Chain A"/>
    <property type="match status" value="1"/>
</dbReference>
<dbReference type="HAMAP" id="MF_00032">
    <property type="entry name" value="eIF_6"/>
    <property type="match status" value="1"/>
</dbReference>
<dbReference type="InterPro" id="IPR002769">
    <property type="entry name" value="eIF6"/>
</dbReference>
<dbReference type="NCBIfam" id="TIGR00323">
    <property type="entry name" value="eIF-6"/>
    <property type="match status" value="1"/>
</dbReference>
<dbReference type="PANTHER" id="PTHR10784">
    <property type="entry name" value="TRANSLATION INITIATION FACTOR 6"/>
    <property type="match status" value="1"/>
</dbReference>
<dbReference type="Pfam" id="PF01912">
    <property type="entry name" value="eIF-6"/>
    <property type="match status" value="1"/>
</dbReference>
<dbReference type="PIRSF" id="PIRSF006413">
    <property type="entry name" value="IF-6"/>
    <property type="match status" value="1"/>
</dbReference>
<dbReference type="SMART" id="SM00654">
    <property type="entry name" value="eIF6"/>
    <property type="match status" value="1"/>
</dbReference>
<dbReference type="SUPFAM" id="SSF55909">
    <property type="entry name" value="Pentein"/>
    <property type="match status" value="1"/>
</dbReference>
<reference key="1">
    <citation type="submission" date="2005-09" db="EMBL/GenBank/DDBJ databases">
        <authorList>
            <person name="Mural R.J."/>
            <person name="Adams M.D."/>
            <person name="Myers E.W."/>
            <person name="Smith H.O."/>
            <person name="Venter J.C."/>
        </authorList>
    </citation>
    <scope>NUCLEOTIDE SEQUENCE [LARGE SCALE GENOMIC DNA]</scope>
    <source>
        <strain>Brown Norway</strain>
    </source>
</reference>
<reference key="2">
    <citation type="journal article" date="2004" name="Genome Res.">
        <title>The status, quality, and expansion of the NIH full-length cDNA project: the Mammalian Gene Collection (MGC).</title>
        <authorList>
            <consortium name="The MGC Project Team"/>
        </authorList>
    </citation>
    <scope>NUCLEOTIDE SEQUENCE [LARGE SCALE MRNA]</scope>
    <source>
        <tissue>Prostate</tissue>
    </source>
</reference>
<reference key="3">
    <citation type="journal article" date="2012" name="Nat. Commun.">
        <title>Quantitative maps of protein phosphorylation sites across 14 different rat organs and tissues.</title>
        <authorList>
            <person name="Lundby A."/>
            <person name="Secher A."/>
            <person name="Lage K."/>
            <person name="Nordsborg N.B."/>
            <person name="Dmytriyev A."/>
            <person name="Lundby C."/>
            <person name="Olsen J.V."/>
        </authorList>
    </citation>
    <scope>PHOSPHORYLATION [LARGE SCALE ANALYSIS] AT SER-243</scope>
    <scope>IDENTIFICATION BY MASS SPECTROMETRY [LARGE SCALE ANALYSIS]</scope>
</reference>
<name>IF6_RAT</name>
<evidence type="ECO:0000250" key="1">
    <source>
        <dbReference type="UniProtKB" id="O55135"/>
    </source>
</evidence>
<evidence type="ECO:0000250" key="2">
    <source>
        <dbReference type="UniProtKB" id="P56537"/>
    </source>
</evidence>
<evidence type="ECO:0000255" key="3">
    <source>
        <dbReference type="HAMAP-Rule" id="MF_03132"/>
    </source>
</evidence>
<evidence type="ECO:0007744" key="4">
    <source>
    </source>
</evidence>
<accession>Q3KRD8</accession>